<organism>
    <name type="scientific">Laribacter hongkongensis (strain HLHK9)</name>
    <dbReference type="NCBI Taxonomy" id="557598"/>
    <lineage>
        <taxon>Bacteria</taxon>
        <taxon>Pseudomonadati</taxon>
        <taxon>Pseudomonadota</taxon>
        <taxon>Betaproteobacteria</taxon>
        <taxon>Neisseriales</taxon>
        <taxon>Aquaspirillaceae</taxon>
        <taxon>Laribacter</taxon>
    </lineage>
</organism>
<dbReference type="EC" id="2.7.7.72" evidence="1"/>
<dbReference type="EC" id="3.1.3.-" evidence="1"/>
<dbReference type="EC" id="3.1.4.-" evidence="1"/>
<dbReference type="EMBL" id="CP001154">
    <property type="protein sequence ID" value="ACO75277.1"/>
    <property type="molecule type" value="Genomic_DNA"/>
</dbReference>
<dbReference type="RefSeq" id="WP_012697763.1">
    <property type="nucleotide sequence ID" value="NC_012559.1"/>
</dbReference>
<dbReference type="SMR" id="C1DAG2"/>
<dbReference type="STRING" id="557598.LHK_02293"/>
<dbReference type="KEGG" id="lhk:LHK_02293"/>
<dbReference type="eggNOG" id="COG0617">
    <property type="taxonomic scope" value="Bacteria"/>
</dbReference>
<dbReference type="HOGENOM" id="CLU_015961_1_1_4"/>
<dbReference type="Proteomes" id="UP000002010">
    <property type="component" value="Chromosome"/>
</dbReference>
<dbReference type="GO" id="GO:0005524">
    <property type="term" value="F:ATP binding"/>
    <property type="evidence" value="ECO:0007669"/>
    <property type="project" value="UniProtKB-UniRule"/>
</dbReference>
<dbReference type="GO" id="GO:0004810">
    <property type="term" value="F:CCA tRNA nucleotidyltransferase activity"/>
    <property type="evidence" value="ECO:0007669"/>
    <property type="project" value="UniProtKB-UniRule"/>
</dbReference>
<dbReference type="GO" id="GO:0004112">
    <property type="term" value="F:cyclic-nucleotide phosphodiesterase activity"/>
    <property type="evidence" value="ECO:0007669"/>
    <property type="project" value="UniProtKB-UniRule"/>
</dbReference>
<dbReference type="GO" id="GO:0000287">
    <property type="term" value="F:magnesium ion binding"/>
    <property type="evidence" value="ECO:0007669"/>
    <property type="project" value="UniProtKB-UniRule"/>
</dbReference>
<dbReference type="GO" id="GO:0016791">
    <property type="term" value="F:phosphatase activity"/>
    <property type="evidence" value="ECO:0007669"/>
    <property type="project" value="UniProtKB-UniRule"/>
</dbReference>
<dbReference type="GO" id="GO:0000049">
    <property type="term" value="F:tRNA binding"/>
    <property type="evidence" value="ECO:0007669"/>
    <property type="project" value="UniProtKB-UniRule"/>
</dbReference>
<dbReference type="GO" id="GO:0042245">
    <property type="term" value="P:RNA repair"/>
    <property type="evidence" value="ECO:0007669"/>
    <property type="project" value="UniProtKB-KW"/>
</dbReference>
<dbReference type="GO" id="GO:0001680">
    <property type="term" value="P:tRNA 3'-terminal CCA addition"/>
    <property type="evidence" value="ECO:0007669"/>
    <property type="project" value="UniProtKB-UniRule"/>
</dbReference>
<dbReference type="CDD" id="cd05398">
    <property type="entry name" value="NT_ClassII-CCAase"/>
    <property type="match status" value="1"/>
</dbReference>
<dbReference type="Gene3D" id="3.30.460.10">
    <property type="entry name" value="Beta Polymerase, domain 2"/>
    <property type="match status" value="1"/>
</dbReference>
<dbReference type="Gene3D" id="1.10.3090.10">
    <property type="entry name" value="cca-adding enzyme, domain 2"/>
    <property type="match status" value="1"/>
</dbReference>
<dbReference type="HAMAP" id="MF_01261">
    <property type="entry name" value="CCA_bact_type1"/>
    <property type="match status" value="1"/>
</dbReference>
<dbReference type="HAMAP" id="MF_01262">
    <property type="entry name" value="CCA_bact_type2"/>
    <property type="match status" value="1"/>
</dbReference>
<dbReference type="InterPro" id="IPR012006">
    <property type="entry name" value="CCA_bact"/>
</dbReference>
<dbReference type="InterPro" id="IPR006674">
    <property type="entry name" value="HD_domain"/>
</dbReference>
<dbReference type="InterPro" id="IPR043519">
    <property type="entry name" value="NT_sf"/>
</dbReference>
<dbReference type="InterPro" id="IPR002646">
    <property type="entry name" value="PolA_pol_head_dom"/>
</dbReference>
<dbReference type="InterPro" id="IPR032828">
    <property type="entry name" value="PolyA_RNA-bd"/>
</dbReference>
<dbReference type="InterPro" id="IPR050124">
    <property type="entry name" value="tRNA_CCA-adding_enzyme"/>
</dbReference>
<dbReference type="NCBIfam" id="NF008137">
    <property type="entry name" value="PRK10885.1"/>
    <property type="match status" value="1"/>
</dbReference>
<dbReference type="PANTHER" id="PTHR47545">
    <property type="entry name" value="MULTIFUNCTIONAL CCA PROTEIN"/>
    <property type="match status" value="1"/>
</dbReference>
<dbReference type="PANTHER" id="PTHR47545:SF1">
    <property type="entry name" value="MULTIFUNCTIONAL CCA PROTEIN"/>
    <property type="match status" value="1"/>
</dbReference>
<dbReference type="Pfam" id="PF01743">
    <property type="entry name" value="PolyA_pol"/>
    <property type="match status" value="1"/>
</dbReference>
<dbReference type="Pfam" id="PF12627">
    <property type="entry name" value="PolyA_pol_RNAbd"/>
    <property type="match status" value="1"/>
</dbReference>
<dbReference type="PIRSF" id="PIRSF000813">
    <property type="entry name" value="CCA_bact"/>
    <property type="match status" value="1"/>
</dbReference>
<dbReference type="SUPFAM" id="SSF81301">
    <property type="entry name" value="Nucleotidyltransferase"/>
    <property type="match status" value="1"/>
</dbReference>
<dbReference type="SUPFAM" id="SSF81891">
    <property type="entry name" value="Poly A polymerase C-terminal region-like"/>
    <property type="match status" value="1"/>
</dbReference>
<dbReference type="PROSITE" id="PS51831">
    <property type="entry name" value="HD"/>
    <property type="match status" value="1"/>
</dbReference>
<accession>C1DAG2</accession>
<sequence length="405" mass="45414">MKTYIVGGAVRDRLLGLPVRDRDWVVTGETPESMRRRGFRPVGRDFPVFLHPDTHEEYALARTERKTARGYHGFSFHAAPDVTLEADLARRDLTINAMAEDENGELVDPFNGRQDLAAGILRHVGEAFVEDPVRILRIARFAARFGFSIAEDTQNLMRFMVDDGEVDHLVPERVWQELSKGLMEAQPSRFFTVLRDCGALARILPEVDALWGVPQRADYHPEVDTGVHAMLVLDQSARDGLGLAARFAALCHDLGKALTPAELLPRHSGHEGRGEAPTRALCERLRVPAECRDLALLTVSFHSHIHRIRELRPDTVLRLLRECDALRRPARFDDLLAVCRCDAHGRPGHEQDAYPQIAIARRYLDAAQSVNAGDIARQTPDKSTIPYRIDAARLCAIEAAKRQIS</sequence>
<comment type="function">
    <text evidence="1">Catalyzes the addition and repair of the essential 3'-terminal CCA sequence in tRNAs without using a nucleic acid template. Adds these three nucleotides in the order of C, C, and A to the tRNA nucleotide-73, using CTP and ATP as substrates and producing inorganic pyrophosphate. tRNA 3'-terminal CCA addition is required both for tRNA processing and repair. Also involved in tRNA surveillance by mediating tandem CCA addition to generate a CCACCA at the 3' terminus of unstable tRNAs. While stable tRNAs receive only 3'-terminal CCA, unstable tRNAs are marked with CCACCA and rapidly degraded.</text>
</comment>
<comment type="catalytic activity">
    <reaction evidence="1">
        <text>a tRNA precursor + 2 CTP + ATP = a tRNA with a 3' CCA end + 3 diphosphate</text>
        <dbReference type="Rhea" id="RHEA:14433"/>
        <dbReference type="Rhea" id="RHEA-COMP:10465"/>
        <dbReference type="Rhea" id="RHEA-COMP:10468"/>
        <dbReference type="ChEBI" id="CHEBI:30616"/>
        <dbReference type="ChEBI" id="CHEBI:33019"/>
        <dbReference type="ChEBI" id="CHEBI:37563"/>
        <dbReference type="ChEBI" id="CHEBI:74896"/>
        <dbReference type="ChEBI" id="CHEBI:83071"/>
        <dbReference type="EC" id="2.7.7.72"/>
    </reaction>
</comment>
<comment type="catalytic activity">
    <reaction evidence="1">
        <text>a tRNA with a 3' CCA end + 2 CTP + ATP = a tRNA with a 3' CCACCA end + 3 diphosphate</text>
        <dbReference type="Rhea" id="RHEA:76235"/>
        <dbReference type="Rhea" id="RHEA-COMP:10468"/>
        <dbReference type="Rhea" id="RHEA-COMP:18655"/>
        <dbReference type="ChEBI" id="CHEBI:30616"/>
        <dbReference type="ChEBI" id="CHEBI:33019"/>
        <dbReference type="ChEBI" id="CHEBI:37563"/>
        <dbReference type="ChEBI" id="CHEBI:83071"/>
        <dbReference type="ChEBI" id="CHEBI:195187"/>
    </reaction>
    <physiologicalReaction direction="left-to-right" evidence="1">
        <dbReference type="Rhea" id="RHEA:76236"/>
    </physiologicalReaction>
</comment>
<comment type="cofactor">
    <cofactor evidence="1">
        <name>Mg(2+)</name>
        <dbReference type="ChEBI" id="CHEBI:18420"/>
    </cofactor>
    <text evidence="1">Magnesium is required for nucleotidyltransferase activity.</text>
</comment>
<comment type="cofactor">
    <cofactor evidence="1">
        <name>Ni(2+)</name>
        <dbReference type="ChEBI" id="CHEBI:49786"/>
    </cofactor>
    <text evidence="1">Nickel for phosphatase activity.</text>
</comment>
<comment type="subunit">
    <text evidence="1">Monomer. Can also form homodimers and oligomers.</text>
</comment>
<comment type="domain">
    <text evidence="1">Comprises two domains: an N-terminal domain containing the nucleotidyltransferase activity and a C-terminal HD domain associated with both phosphodiesterase and phosphatase activities.</text>
</comment>
<comment type="miscellaneous">
    <text evidence="1">A single active site specifically recognizes both ATP and CTP and is responsible for their addition.</text>
</comment>
<comment type="similarity">
    <text evidence="1">Belongs to the tRNA nucleotidyltransferase/poly(A) polymerase family. Bacterial CCA-adding enzyme type 1 subfamily.</text>
</comment>
<proteinExistence type="inferred from homology"/>
<protein>
    <recommendedName>
        <fullName evidence="1">Multifunctional CCA protein</fullName>
    </recommendedName>
    <domain>
        <recommendedName>
            <fullName evidence="1">CCA-adding enzyme</fullName>
            <ecNumber evidence="1">2.7.7.72</ecNumber>
        </recommendedName>
        <alternativeName>
            <fullName evidence="1">CCA tRNA nucleotidyltransferase</fullName>
        </alternativeName>
        <alternativeName>
            <fullName evidence="1">tRNA CCA-pyrophosphorylase</fullName>
        </alternativeName>
        <alternativeName>
            <fullName evidence="1">tRNA adenylyl-/cytidylyl-transferase</fullName>
        </alternativeName>
        <alternativeName>
            <fullName evidence="1">tRNA nucleotidyltransferase</fullName>
        </alternativeName>
        <alternativeName>
            <fullName evidence="1">tRNA-NT</fullName>
        </alternativeName>
    </domain>
    <domain>
        <recommendedName>
            <fullName evidence="1">2'-nucleotidase</fullName>
            <ecNumber evidence="1">3.1.3.-</ecNumber>
        </recommendedName>
    </domain>
    <domain>
        <recommendedName>
            <fullName evidence="1">2',3'-cyclic phosphodiesterase</fullName>
            <ecNumber evidence="1">3.1.4.-</ecNumber>
        </recommendedName>
    </domain>
    <domain>
        <recommendedName>
            <fullName evidence="1">Phosphatase</fullName>
            <ecNumber evidence="1">3.1.3.-</ecNumber>
        </recommendedName>
    </domain>
</protein>
<evidence type="ECO:0000255" key="1">
    <source>
        <dbReference type="HAMAP-Rule" id="MF_01261"/>
    </source>
</evidence>
<name>CCA_LARHH</name>
<feature type="chain" id="PRO_1000165122" description="Multifunctional CCA protein">
    <location>
        <begin position="1"/>
        <end position="405"/>
    </location>
</feature>
<feature type="domain" description="HD" evidence="1">
    <location>
        <begin position="225"/>
        <end position="326"/>
    </location>
</feature>
<feature type="binding site" evidence="1">
    <location>
        <position position="8"/>
    </location>
    <ligand>
        <name>ATP</name>
        <dbReference type="ChEBI" id="CHEBI:30616"/>
    </ligand>
</feature>
<feature type="binding site" evidence="1">
    <location>
        <position position="8"/>
    </location>
    <ligand>
        <name>CTP</name>
        <dbReference type="ChEBI" id="CHEBI:37563"/>
    </ligand>
</feature>
<feature type="binding site" evidence="1">
    <location>
        <position position="11"/>
    </location>
    <ligand>
        <name>ATP</name>
        <dbReference type="ChEBI" id="CHEBI:30616"/>
    </ligand>
</feature>
<feature type="binding site" evidence="1">
    <location>
        <position position="11"/>
    </location>
    <ligand>
        <name>CTP</name>
        <dbReference type="ChEBI" id="CHEBI:37563"/>
    </ligand>
</feature>
<feature type="binding site" evidence="1">
    <location>
        <position position="21"/>
    </location>
    <ligand>
        <name>Mg(2+)</name>
        <dbReference type="ChEBI" id="CHEBI:18420"/>
    </ligand>
</feature>
<feature type="binding site" evidence="1">
    <location>
        <position position="23"/>
    </location>
    <ligand>
        <name>Mg(2+)</name>
        <dbReference type="ChEBI" id="CHEBI:18420"/>
    </ligand>
</feature>
<feature type="binding site" evidence="1">
    <location>
        <position position="91"/>
    </location>
    <ligand>
        <name>ATP</name>
        <dbReference type="ChEBI" id="CHEBI:30616"/>
    </ligand>
</feature>
<feature type="binding site" evidence="1">
    <location>
        <position position="91"/>
    </location>
    <ligand>
        <name>CTP</name>
        <dbReference type="ChEBI" id="CHEBI:37563"/>
    </ligand>
</feature>
<feature type="binding site" evidence="1">
    <location>
        <position position="137"/>
    </location>
    <ligand>
        <name>ATP</name>
        <dbReference type="ChEBI" id="CHEBI:30616"/>
    </ligand>
</feature>
<feature type="binding site" evidence="1">
    <location>
        <position position="137"/>
    </location>
    <ligand>
        <name>CTP</name>
        <dbReference type="ChEBI" id="CHEBI:37563"/>
    </ligand>
</feature>
<feature type="binding site" evidence="1">
    <location>
        <position position="140"/>
    </location>
    <ligand>
        <name>ATP</name>
        <dbReference type="ChEBI" id="CHEBI:30616"/>
    </ligand>
</feature>
<feature type="binding site" evidence="1">
    <location>
        <position position="140"/>
    </location>
    <ligand>
        <name>CTP</name>
        <dbReference type="ChEBI" id="CHEBI:37563"/>
    </ligand>
</feature>
<keyword id="KW-0067">ATP-binding</keyword>
<keyword id="KW-0378">Hydrolase</keyword>
<keyword id="KW-0460">Magnesium</keyword>
<keyword id="KW-0479">Metal-binding</keyword>
<keyword id="KW-0511">Multifunctional enzyme</keyword>
<keyword id="KW-0533">Nickel</keyword>
<keyword id="KW-0547">Nucleotide-binding</keyword>
<keyword id="KW-0548">Nucleotidyltransferase</keyword>
<keyword id="KW-1185">Reference proteome</keyword>
<keyword id="KW-0692">RNA repair</keyword>
<keyword id="KW-0694">RNA-binding</keyword>
<keyword id="KW-0808">Transferase</keyword>
<keyword id="KW-0819">tRNA processing</keyword>
<gene>
    <name evidence="1" type="primary">cca</name>
    <name type="ordered locus">LHK_02293</name>
</gene>
<reference key="1">
    <citation type="journal article" date="2009" name="PLoS Genet.">
        <title>The complete genome and proteome of Laribacter hongkongensis reveal potential mechanisms for adaptations to different temperatures and habitats.</title>
        <authorList>
            <person name="Woo P.C.Y."/>
            <person name="Lau S.K.P."/>
            <person name="Tse H."/>
            <person name="Teng J.L.L."/>
            <person name="Curreem S.O."/>
            <person name="Tsang A.K.L."/>
            <person name="Fan R.Y.Y."/>
            <person name="Wong G.K.M."/>
            <person name="Huang Y."/>
            <person name="Loman N.J."/>
            <person name="Snyder L.A.S."/>
            <person name="Cai J.J."/>
            <person name="Huang J.-D."/>
            <person name="Mak W."/>
            <person name="Pallen M.J."/>
            <person name="Lok S."/>
            <person name="Yuen K.-Y."/>
        </authorList>
    </citation>
    <scope>NUCLEOTIDE SEQUENCE [LARGE SCALE GENOMIC DNA]</scope>
    <source>
        <strain>HLHK9</strain>
    </source>
</reference>